<evidence type="ECO:0000255" key="1">
    <source>
        <dbReference type="HAMAP-Rule" id="MF_01646"/>
    </source>
</evidence>
<protein>
    <recommendedName>
        <fullName evidence="1">Siroheme synthase 1</fullName>
    </recommendedName>
    <domain>
        <recommendedName>
            <fullName evidence="1">Uroporphyrinogen-III C-methyltransferase 1</fullName>
            <shortName evidence="1">Urogen III methylase 1</shortName>
            <ecNumber evidence="1">2.1.1.107</ecNumber>
        </recommendedName>
        <alternativeName>
            <fullName evidence="1">SUMT 1</fullName>
        </alternativeName>
        <alternativeName>
            <fullName evidence="1">Uroporphyrinogen III methylase 1</fullName>
            <shortName evidence="1">UROM 1</shortName>
        </alternativeName>
    </domain>
    <domain>
        <recommendedName>
            <fullName evidence="1">Precorrin-2 dehydrogenase 1</fullName>
            <ecNumber evidence="1">1.3.1.76</ecNumber>
        </recommendedName>
    </domain>
    <domain>
        <recommendedName>
            <fullName evidence="1">Sirohydrochlorin ferrochelatase 1</fullName>
            <ecNumber evidence="1">4.99.1.4</ecNumber>
        </recommendedName>
    </domain>
</protein>
<sequence>MHHYPIFLKLHGCRCLVVGGGEAAARRAGDLLRAGARVELIAPVLAAPCEQLLDTSPGELHHRAEPFAAGMEEGAALVVGASGDEATDRTVYEACRARGIPVNVAGRPSLSTYITPVQVDRSPLQLAVSSGGAAPVLARQIASRLETLLPAAYGRLARLAGRMREQVRVALPDKDWRLRFWEQIFDGAAAESVLAGREAEGEAELLRLLEQEQARPAPQGEVFLVGAGPGDPDLLTFRALRLMQRADVVLYDRLAAPALLDLVRKEAERIPVGKRRGRHTLPQERINERLVELARAGKRVLRLKGGDPFLFGRGGEEIEGLIEQDIPFQVVPGISAAQGAASYAGIPLTHRDYAQTCRLLTGHRRAGHPQMKAHAPYRQDETLIIYMGLVNLEAVCEQLCECGLPPEHPAAVVAQATTPQQRVVLGNLRTLAERVRAERVESPALVVVGPTVQLHPRLGWYRGEAEDRDAAASIDPCWTGGMRD</sequence>
<accession>A1WWP8</accession>
<gene>
    <name evidence="1" type="primary">cysG1</name>
    <name type="ordered locus">Hhal_1343</name>
</gene>
<comment type="function">
    <text evidence="1">Multifunctional enzyme that catalyzes the SAM-dependent methylations of uroporphyrinogen III at position C-2 and C-7 to form precorrin-2 via precorrin-1. Then it catalyzes the NAD-dependent ring dehydrogenation of precorrin-2 to yield sirohydrochlorin. Finally, it catalyzes the ferrochelation of sirohydrochlorin to yield siroheme.</text>
</comment>
<comment type="catalytic activity">
    <reaction evidence="1">
        <text>uroporphyrinogen III + 2 S-adenosyl-L-methionine = precorrin-2 + 2 S-adenosyl-L-homocysteine + H(+)</text>
        <dbReference type="Rhea" id="RHEA:32459"/>
        <dbReference type="ChEBI" id="CHEBI:15378"/>
        <dbReference type="ChEBI" id="CHEBI:57308"/>
        <dbReference type="ChEBI" id="CHEBI:57856"/>
        <dbReference type="ChEBI" id="CHEBI:58827"/>
        <dbReference type="ChEBI" id="CHEBI:59789"/>
        <dbReference type="EC" id="2.1.1.107"/>
    </reaction>
</comment>
<comment type="catalytic activity">
    <reaction evidence="1">
        <text>precorrin-2 + NAD(+) = sirohydrochlorin + NADH + 2 H(+)</text>
        <dbReference type="Rhea" id="RHEA:15613"/>
        <dbReference type="ChEBI" id="CHEBI:15378"/>
        <dbReference type="ChEBI" id="CHEBI:57540"/>
        <dbReference type="ChEBI" id="CHEBI:57945"/>
        <dbReference type="ChEBI" id="CHEBI:58351"/>
        <dbReference type="ChEBI" id="CHEBI:58827"/>
        <dbReference type="EC" id="1.3.1.76"/>
    </reaction>
</comment>
<comment type="catalytic activity">
    <reaction evidence="1">
        <text>siroheme + 2 H(+) = sirohydrochlorin + Fe(2+)</text>
        <dbReference type="Rhea" id="RHEA:24360"/>
        <dbReference type="ChEBI" id="CHEBI:15378"/>
        <dbReference type="ChEBI" id="CHEBI:29033"/>
        <dbReference type="ChEBI" id="CHEBI:58351"/>
        <dbReference type="ChEBI" id="CHEBI:60052"/>
        <dbReference type="EC" id="4.99.1.4"/>
    </reaction>
</comment>
<comment type="pathway">
    <text evidence="1">Cofactor biosynthesis; adenosylcobalamin biosynthesis; precorrin-2 from uroporphyrinogen III: step 1/1.</text>
</comment>
<comment type="pathway">
    <text evidence="1">Cofactor biosynthesis; adenosylcobalamin biosynthesis; sirohydrochlorin from precorrin-2: step 1/1.</text>
</comment>
<comment type="pathway">
    <text evidence="1">Porphyrin-containing compound metabolism; siroheme biosynthesis; precorrin-2 from uroporphyrinogen III: step 1/1.</text>
</comment>
<comment type="pathway">
    <text evidence="1">Porphyrin-containing compound metabolism; siroheme biosynthesis; siroheme from sirohydrochlorin: step 1/1.</text>
</comment>
<comment type="pathway">
    <text evidence="1">Porphyrin-containing compound metabolism; siroheme biosynthesis; sirohydrochlorin from precorrin-2: step 1/1.</text>
</comment>
<comment type="similarity">
    <text evidence="1">In the N-terminal section; belongs to the precorrin-2 dehydrogenase / sirohydrochlorin ferrochelatase family.</text>
</comment>
<comment type="similarity">
    <text evidence="1">In the C-terminal section; belongs to the precorrin methyltransferase family.</text>
</comment>
<dbReference type="EC" id="2.1.1.107" evidence="1"/>
<dbReference type="EC" id="1.3.1.76" evidence="1"/>
<dbReference type="EC" id="4.99.1.4" evidence="1"/>
<dbReference type="EMBL" id="CP000544">
    <property type="protein sequence ID" value="ABM62110.1"/>
    <property type="molecule type" value="Genomic_DNA"/>
</dbReference>
<dbReference type="RefSeq" id="WP_011814132.1">
    <property type="nucleotide sequence ID" value="NC_008789.1"/>
</dbReference>
<dbReference type="SMR" id="A1WWP8"/>
<dbReference type="STRING" id="349124.Hhal_1343"/>
<dbReference type="KEGG" id="hha:Hhal_1343"/>
<dbReference type="eggNOG" id="COG0007">
    <property type="taxonomic scope" value="Bacteria"/>
</dbReference>
<dbReference type="eggNOG" id="COG1648">
    <property type="taxonomic scope" value="Bacteria"/>
</dbReference>
<dbReference type="HOGENOM" id="CLU_011276_2_2_6"/>
<dbReference type="OrthoDB" id="9815856at2"/>
<dbReference type="UniPathway" id="UPA00148">
    <property type="reaction ID" value="UER00211"/>
</dbReference>
<dbReference type="UniPathway" id="UPA00148">
    <property type="reaction ID" value="UER00222"/>
</dbReference>
<dbReference type="UniPathway" id="UPA00262">
    <property type="reaction ID" value="UER00211"/>
</dbReference>
<dbReference type="UniPathway" id="UPA00262">
    <property type="reaction ID" value="UER00222"/>
</dbReference>
<dbReference type="UniPathway" id="UPA00262">
    <property type="reaction ID" value="UER00376"/>
</dbReference>
<dbReference type="Proteomes" id="UP000000647">
    <property type="component" value="Chromosome"/>
</dbReference>
<dbReference type="GO" id="GO:0051287">
    <property type="term" value="F:NAD binding"/>
    <property type="evidence" value="ECO:0007669"/>
    <property type="project" value="InterPro"/>
</dbReference>
<dbReference type="GO" id="GO:0043115">
    <property type="term" value="F:precorrin-2 dehydrogenase activity"/>
    <property type="evidence" value="ECO:0007669"/>
    <property type="project" value="UniProtKB-UniRule"/>
</dbReference>
<dbReference type="GO" id="GO:0051266">
    <property type="term" value="F:sirohydrochlorin ferrochelatase activity"/>
    <property type="evidence" value="ECO:0007669"/>
    <property type="project" value="UniProtKB-EC"/>
</dbReference>
<dbReference type="GO" id="GO:0004851">
    <property type="term" value="F:uroporphyrin-III C-methyltransferase activity"/>
    <property type="evidence" value="ECO:0007669"/>
    <property type="project" value="UniProtKB-UniRule"/>
</dbReference>
<dbReference type="GO" id="GO:0009236">
    <property type="term" value="P:cobalamin biosynthetic process"/>
    <property type="evidence" value="ECO:0007669"/>
    <property type="project" value="UniProtKB-UniRule"/>
</dbReference>
<dbReference type="GO" id="GO:0032259">
    <property type="term" value="P:methylation"/>
    <property type="evidence" value="ECO:0007669"/>
    <property type="project" value="UniProtKB-KW"/>
</dbReference>
<dbReference type="GO" id="GO:0019354">
    <property type="term" value="P:siroheme biosynthetic process"/>
    <property type="evidence" value="ECO:0007669"/>
    <property type="project" value="UniProtKB-UniRule"/>
</dbReference>
<dbReference type="CDD" id="cd11642">
    <property type="entry name" value="SUMT"/>
    <property type="match status" value="1"/>
</dbReference>
<dbReference type="FunFam" id="3.30.950.10:FF:000001">
    <property type="entry name" value="Siroheme synthase"/>
    <property type="match status" value="1"/>
</dbReference>
<dbReference type="FunFam" id="3.40.1010.10:FF:000001">
    <property type="entry name" value="Siroheme synthase"/>
    <property type="match status" value="1"/>
</dbReference>
<dbReference type="Gene3D" id="3.40.1010.10">
    <property type="entry name" value="Cobalt-precorrin-4 Transmethylase, Domain 1"/>
    <property type="match status" value="1"/>
</dbReference>
<dbReference type="Gene3D" id="3.30.950.10">
    <property type="entry name" value="Methyltransferase, Cobalt-precorrin-4 Transmethylase, Domain 2"/>
    <property type="match status" value="1"/>
</dbReference>
<dbReference type="Gene3D" id="3.40.50.720">
    <property type="entry name" value="NAD(P)-binding Rossmann-like Domain"/>
    <property type="match status" value="1"/>
</dbReference>
<dbReference type="Gene3D" id="1.10.8.210">
    <property type="entry name" value="Sirohaem synthase, dimerisation domain"/>
    <property type="match status" value="1"/>
</dbReference>
<dbReference type="Gene3D" id="3.30.160.110">
    <property type="entry name" value="Siroheme synthase, domain 2"/>
    <property type="match status" value="1"/>
</dbReference>
<dbReference type="HAMAP" id="MF_01646">
    <property type="entry name" value="Siroheme_synth"/>
    <property type="match status" value="1"/>
</dbReference>
<dbReference type="InterPro" id="IPR000878">
    <property type="entry name" value="4pyrrol_Mease"/>
</dbReference>
<dbReference type="InterPro" id="IPR035996">
    <property type="entry name" value="4pyrrol_Methylase_sf"/>
</dbReference>
<dbReference type="InterPro" id="IPR014777">
    <property type="entry name" value="4pyrrole_Mease_sub1"/>
</dbReference>
<dbReference type="InterPro" id="IPR014776">
    <property type="entry name" value="4pyrrole_Mease_sub2"/>
</dbReference>
<dbReference type="InterPro" id="IPR006366">
    <property type="entry name" value="CobA/CysG_C"/>
</dbReference>
<dbReference type="InterPro" id="IPR036291">
    <property type="entry name" value="NAD(P)-bd_dom_sf"/>
</dbReference>
<dbReference type="InterPro" id="IPR050161">
    <property type="entry name" value="Siro_Cobalamin_biosynth"/>
</dbReference>
<dbReference type="InterPro" id="IPR037115">
    <property type="entry name" value="Sirohaem_synt_dimer_dom_sf"/>
</dbReference>
<dbReference type="InterPro" id="IPR012409">
    <property type="entry name" value="Sirohaem_synth"/>
</dbReference>
<dbReference type="InterPro" id="IPR028281">
    <property type="entry name" value="Sirohaem_synthase_central"/>
</dbReference>
<dbReference type="InterPro" id="IPR019478">
    <property type="entry name" value="Sirohaem_synthase_dimer_dom"/>
</dbReference>
<dbReference type="InterPro" id="IPR006367">
    <property type="entry name" value="Sirohaem_synthase_N"/>
</dbReference>
<dbReference type="InterPro" id="IPR003043">
    <property type="entry name" value="Uropor_MeTrfase_CS"/>
</dbReference>
<dbReference type="NCBIfam" id="TIGR01469">
    <property type="entry name" value="cobA_cysG_Cterm"/>
    <property type="match status" value="1"/>
</dbReference>
<dbReference type="NCBIfam" id="TIGR01470">
    <property type="entry name" value="cysG_Nterm"/>
    <property type="match status" value="1"/>
</dbReference>
<dbReference type="NCBIfam" id="NF004790">
    <property type="entry name" value="PRK06136.1"/>
    <property type="match status" value="1"/>
</dbReference>
<dbReference type="NCBIfam" id="NF007922">
    <property type="entry name" value="PRK10637.1"/>
    <property type="match status" value="1"/>
</dbReference>
<dbReference type="PANTHER" id="PTHR45790:SF1">
    <property type="entry name" value="SIROHEME SYNTHASE"/>
    <property type="match status" value="1"/>
</dbReference>
<dbReference type="PANTHER" id="PTHR45790">
    <property type="entry name" value="SIROHEME SYNTHASE-RELATED"/>
    <property type="match status" value="1"/>
</dbReference>
<dbReference type="Pfam" id="PF10414">
    <property type="entry name" value="CysG_dimeriser"/>
    <property type="match status" value="1"/>
</dbReference>
<dbReference type="Pfam" id="PF13241">
    <property type="entry name" value="NAD_binding_7"/>
    <property type="match status" value="1"/>
</dbReference>
<dbReference type="Pfam" id="PF14824">
    <property type="entry name" value="Sirohm_synth_M"/>
    <property type="match status" value="1"/>
</dbReference>
<dbReference type="Pfam" id="PF00590">
    <property type="entry name" value="TP_methylase"/>
    <property type="match status" value="1"/>
</dbReference>
<dbReference type="PIRSF" id="PIRSF036426">
    <property type="entry name" value="Sirohaem_synth"/>
    <property type="match status" value="1"/>
</dbReference>
<dbReference type="SUPFAM" id="SSF51735">
    <property type="entry name" value="NAD(P)-binding Rossmann-fold domains"/>
    <property type="match status" value="1"/>
</dbReference>
<dbReference type="SUPFAM" id="SSF75615">
    <property type="entry name" value="Siroheme synthase middle domains-like"/>
    <property type="match status" value="1"/>
</dbReference>
<dbReference type="SUPFAM" id="SSF53790">
    <property type="entry name" value="Tetrapyrrole methylase"/>
    <property type="match status" value="1"/>
</dbReference>
<dbReference type="PROSITE" id="PS00840">
    <property type="entry name" value="SUMT_2"/>
    <property type="match status" value="1"/>
</dbReference>
<feature type="chain" id="PRO_0000330516" description="Siroheme synthase 1">
    <location>
        <begin position="1"/>
        <end position="484"/>
    </location>
</feature>
<feature type="region of interest" description="Precorrin-2 dehydrogenase /sirohydrochlorin ferrochelatase" evidence="1">
    <location>
        <begin position="1"/>
        <end position="205"/>
    </location>
</feature>
<feature type="region of interest" description="Uroporphyrinogen-III C-methyltransferase" evidence="1">
    <location>
        <begin position="220"/>
        <end position="484"/>
    </location>
</feature>
<feature type="active site" description="Proton acceptor" evidence="1">
    <location>
        <position position="252"/>
    </location>
</feature>
<feature type="active site" description="Proton donor" evidence="1">
    <location>
        <position position="274"/>
    </location>
</feature>
<feature type="binding site" evidence="1">
    <location>
        <begin position="22"/>
        <end position="23"/>
    </location>
    <ligand>
        <name>NAD(+)</name>
        <dbReference type="ChEBI" id="CHEBI:57540"/>
    </ligand>
</feature>
<feature type="binding site" evidence="1">
    <location>
        <begin position="43"/>
        <end position="44"/>
    </location>
    <ligand>
        <name>NAD(+)</name>
        <dbReference type="ChEBI" id="CHEBI:57540"/>
    </ligand>
</feature>
<feature type="binding site" evidence="1">
    <location>
        <position position="229"/>
    </location>
    <ligand>
        <name>S-adenosyl-L-methionine</name>
        <dbReference type="ChEBI" id="CHEBI:59789"/>
    </ligand>
</feature>
<feature type="binding site" evidence="1">
    <location>
        <begin position="305"/>
        <end position="307"/>
    </location>
    <ligand>
        <name>S-adenosyl-L-methionine</name>
        <dbReference type="ChEBI" id="CHEBI:59789"/>
    </ligand>
</feature>
<feature type="binding site" evidence="1">
    <location>
        <position position="310"/>
    </location>
    <ligand>
        <name>S-adenosyl-L-methionine</name>
        <dbReference type="ChEBI" id="CHEBI:59789"/>
    </ligand>
</feature>
<feature type="binding site" evidence="1">
    <location>
        <begin position="335"/>
        <end position="336"/>
    </location>
    <ligand>
        <name>S-adenosyl-L-methionine</name>
        <dbReference type="ChEBI" id="CHEBI:59789"/>
    </ligand>
</feature>
<feature type="binding site" evidence="1">
    <location>
        <position position="387"/>
    </location>
    <ligand>
        <name>S-adenosyl-L-methionine</name>
        <dbReference type="ChEBI" id="CHEBI:59789"/>
    </ligand>
</feature>
<feature type="binding site" evidence="1">
    <location>
        <position position="416"/>
    </location>
    <ligand>
        <name>S-adenosyl-L-methionine</name>
        <dbReference type="ChEBI" id="CHEBI:59789"/>
    </ligand>
</feature>
<feature type="modified residue" description="Phosphoserine" evidence="1">
    <location>
        <position position="130"/>
    </location>
</feature>
<reference key="1">
    <citation type="submission" date="2006-12" db="EMBL/GenBank/DDBJ databases">
        <title>Complete sequence of Halorhodospira halophila SL1.</title>
        <authorList>
            <consortium name="US DOE Joint Genome Institute"/>
            <person name="Copeland A."/>
            <person name="Lucas S."/>
            <person name="Lapidus A."/>
            <person name="Barry K."/>
            <person name="Detter J.C."/>
            <person name="Glavina del Rio T."/>
            <person name="Hammon N."/>
            <person name="Israni S."/>
            <person name="Dalin E."/>
            <person name="Tice H."/>
            <person name="Pitluck S."/>
            <person name="Saunders E."/>
            <person name="Brettin T."/>
            <person name="Bruce D."/>
            <person name="Han C."/>
            <person name="Tapia R."/>
            <person name="Schmutz J."/>
            <person name="Larimer F."/>
            <person name="Land M."/>
            <person name="Hauser L."/>
            <person name="Kyrpides N."/>
            <person name="Mikhailova N."/>
            <person name="Hoff W."/>
            <person name="Richardson P."/>
        </authorList>
    </citation>
    <scope>NUCLEOTIDE SEQUENCE [LARGE SCALE GENOMIC DNA]</scope>
    <source>
        <strain>DSM 244 / SL1</strain>
    </source>
</reference>
<name>CYSG1_HALHL</name>
<organism>
    <name type="scientific">Halorhodospira halophila (strain DSM 244 / SL1)</name>
    <name type="common">Ectothiorhodospira halophila (strain DSM 244 / SL1)</name>
    <dbReference type="NCBI Taxonomy" id="349124"/>
    <lineage>
        <taxon>Bacteria</taxon>
        <taxon>Pseudomonadati</taxon>
        <taxon>Pseudomonadota</taxon>
        <taxon>Gammaproteobacteria</taxon>
        <taxon>Chromatiales</taxon>
        <taxon>Ectothiorhodospiraceae</taxon>
        <taxon>Halorhodospira</taxon>
    </lineage>
</organism>
<keyword id="KW-0169">Cobalamin biosynthesis</keyword>
<keyword id="KW-0456">Lyase</keyword>
<keyword id="KW-0489">Methyltransferase</keyword>
<keyword id="KW-0511">Multifunctional enzyme</keyword>
<keyword id="KW-0520">NAD</keyword>
<keyword id="KW-0560">Oxidoreductase</keyword>
<keyword id="KW-0597">Phosphoprotein</keyword>
<keyword id="KW-0627">Porphyrin biosynthesis</keyword>
<keyword id="KW-1185">Reference proteome</keyword>
<keyword id="KW-0949">S-adenosyl-L-methionine</keyword>
<keyword id="KW-0808">Transferase</keyword>
<proteinExistence type="inferred from homology"/>